<sequence>MNSEASVFSNMDWSQLAHSLHKKANNSSSSTTGAFPQLTSFTKPTATNGVDSPTSSHIDPSVSAKLDSQRKLSLKSGNMWDSLNAPSELTSKNPTVSSTTSSANPAIVSNGGSPFYKNPVVANNPSSTFDMSTNLFNSKNANTSFTNAFSNEGISPGFLRDCFPSSNSITTGTASPKLGSPFNHINRPVLDRSPSSFSQSRSAVSGNMNPGVGTLQQPQRAGSDTFPDLNTSSSNQPGGEPNVASANTHSLEILSSSAYHPSGSSNGISAGLTQSVASPVGQVDNLADFSQSPLRRGPSRFPTNSNVPVGNSMSIRDTDSPLNILVDKAKAKASIKENASQPVAPSASQREHSAVNSPAAAMSPSTAMFSSEAFPQHLASLIPPALLHWLYKDPQNNVQGPFTGVDMHQWYRAGYFPLGLPIKRLEEEEYYSLAFFIRQVGNQLEPFLVPLSPVTVQNASWNAQGTDLPLSNYLPESSEQNRGGNKHLELYPSTAEVSNVRNDESKANSLSEISYNQQSECRSSELNVNEDSANQKEESALGTSDNSDMYEKENTPIHHNESLNQLSKDLGSISLSEETKQEKPSKLKETVESKRLSTGVQKQSPAASKEIPVTSGSQTTAPKPSPWKSLPPKHLPSLDETISREMSIASSEALPQVEKSNSDQPPVAIPSTSKTGSPWAKVSDVSTSMAQEIQRMEKQNENLKSKVASNPVSQTSTNAKASTPALASGSIWGSPSVINAWANKPAALKSPLIKKNIQQAELAQNKQQSSVTTASPRSNALNANTPKAAAPSSNVTMKNVTSILETSTFEGEDTWSVVGPGGKIVNQQSPSAQQTTRSPSKVSATLNAGNSQASTSSKLQQVVSMSGHSPDFLAWCKISLKGLNEGVNYEEFLDMLLSLPAENNVETFEIISDSIYANSTIMDGRRFASEFTRRRIADLTGKDGQQSNNKSQSELGNSSGAWSQVVRNKPKQGTEWNSAFKVVTSKKNKKRV</sequence>
<dbReference type="EMBL" id="CU329670">
    <property type="protein sequence ID" value="CAB11716.1"/>
    <property type="molecule type" value="Genomic_DNA"/>
</dbReference>
<dbReference type="PIR" id="T38817">
    <property type="entry name" value="T38817"/>
</dbReference>
<dbReference type="RefSeq" id="NP_594756.1">
    <property type="nucleotide sequence ID" value="NM_001020183.2"/>
</dbReference>
<dbReference type="SMR" id="O36025"/>
<dbReference type="BioGRID" id="279865">
    <property type="interactions" value="36"/>
</dbReference>
<dbReference type="FunCoup" id="O36025">
    <property type="interactions" value="412"/>
</dbReference>
<dbReference type="IntAct" id="O36025">
    <property type="interactions" value="2"/>
</dbReference>
<dbReference type="STRING" id="284812.O36025"/>
<dbReference type="iPTMnet" id="O36025"/>
<dbReference type="PaxDb" id="4896-SPAC4F10.13c.1"/>
<dbReference type="EnsemblFungi" id="SPAC4F10.13c.1">
    <property type="protein sequence ID" value="SPAC4F10.13c.1:pep"/>
    <property type="gene ID" value="SPAC4F10.13c"/>
</dbReference>
<dbReference type="GeneID" id="2543445"/>
<dbReference type="KEGG" id="spo:2543445"/>
<dbReference type="PomBase" id="SPAC4F10.13c">
    <property type="gene designation" value="mpd2"/>
</dbReference>
<dbReference type="VEuPathDB" id="FungiDB:SPAC4F10.13c"/>
<dbReference type="eggNOG" id="KOG1862">
    <property type="taxonomic scope" value="Eukaryota"/>
</dbReference>
<dbReference type="HOGENOM" id="CLU_292587_0_0_1"/>
<dbReference type="InParanoid" id="O36025"/>
<dbReference type="OMA" id="RQEFLRW"/>
<dbReference type="PhylomeDB" id="O36025"/>
<dbReference type="PRO" id="PR:O36025"/>
<dbReference type="Proteomes" id="UP000002485">
    <property type="component" value="Chromosome I"/>
</dbReference>
<dbReference type="GO" id="GO:0005737">
    <property type="term" value="C:cytoplasm"/>
    <property type="evidence" value="ECO:0007005"/>
    <property type="project" value="PomBase"/>
</dbReference>
<dbReference type="GO" id="GO:0005829">
    <property type="term" value="C:cytosol"/>
    <property type="evidence" value="ECO:0007005"/>
    <property type="project" value="PomBase"/>
</dbReference>
<dbReference type="GO" id="GO:0006888">
    <property type="term" value="P:endoplasmic reticulum to Golgi vesicle-mediated transport"/>
    <property type="evidence" value="ECO:0000266"/>
    <property type="project" value="PomBase"/>
</dbReference>
<dbReference type="GO" id="GO:0051028">
    <property type="term" value="P:mRNA transport"/>
    <property type="evidence" value="ECO:0007669"/>
    <property type="project" value="UniProtKB-KW"/>
</dbReference>
<dbReference type="CDD" id="cd00072">
    <property type="entry name" value="GYF"/>
    <property type="match status" value="1"/>
</dbReference>
<dbReference type="Gene3D" id="3.30.1490.40">
    <property type="match status" value="1"/>
</dbReference>
<dbReference type="InterPro" id="IPR051640">
    <property type="entry name" value="GRB10-interact_GYF"/>
</dbReference>
<dbReference type="InterPro" id="IPR003169">
    <property type="entry name" value="GYF"/>
</dbReference>
<dbReference type="InterPro" id="IPR035445">
    <property type="entry name" value="GYF-like_dom_sf"/>
</dbReference>
<dbReference type="PANTHER" id="PTHR14445:SF36">
    <property type="entry name" value="FI03272P-RELATED"/>
    <property type="match status" value="1"/>
</dbReference>
<dbReference type="PANTHER" id="PTHR14445">
    <property type="entry name" value="GRB10 INTERACTING GYF PROTEIN"/>
    <property type="match status" value="1"/>
</dbReference>
<dbReference type="Pfam" id="PF02213">
    <property type="entry name" value="GYF"/>
    <property type="match status" value="1"/>
</dbReference>
<dbReference type="SMART" id="SM00444">
    <property type="entry name" value="GYF"/>
    <property type="match status" value="1"/>
</dbReference>
<dbReference type="SUPFAM" id="SSF55277">
    <property type="entry name" value="GYF domain"/>
    <property type="match status" value="1"/>
</dbReference>
<dbReference type="PROSITE" id="PS50829">
    <property type="entry name" value="GYF"/>
    <property type="match status" value="1"/>
</dbReference>
<proteinExistence type="evidence at protein level"/>
<organism>
    <name type="scientific">Schizosaccharomyces pombe (strain 972 / ATCC 24843)</name>
    <name type="common">Fission yeast</name>
    <dbReference type="NCBI Taxonomy" id="284812"/>
    <lineage>
        <taxon>Eukaryota</taxon>
        <taxon>Fungi</taxon>
        <taxon>Dikarya</taxon>
        <taxon>Ascomycota</taxon>
        <taxon>Taphrinomycotina</taxon>
        <taxon>Schizosaccharomycetes</taxon>
        <taxon>Schizosaccharomycetales</taxon>
        <taxon>Schizosaccharomycetaceae</taxon>
        <taxon>Schizosaccharomyces</taxon>
    </lineage>
</organism>
<comment type="function">
    <text evidence="3">Has a role in mRNA export from the nucleus.</text>
</comment>
<comment type="subcellular location">
    <subcellularLocation>
        <location evidence="4">Cytoplasm</location>
    </subcellularLocation>
</comment>
<comment type="similarity">
    <text evidence="6">Belongs to the SMY2/mpd2 family.</text>
</comment>
<feature type="chain" id="PRO_0000339406" description="GYF domain-containing protein mpd2">
    <location>
        <begin position="1"/>
        <end position="992"/>
    </location>
</feature>
<feature type="domain" description="GYF" evidence="1">
    <location>
        <begin position="386"/>
        <end position="434"/>
    </location>
</feature>
<feature type="region of interest" description="Disordered" evidence="2">
    <location>
        <begin position="24"/>
        <end position="105"/>
    </location>
</feature>
<feature type="region of interest" description="Disordered" evidence="2">
    <location>
        <begin position="172"/>
        <end position="245"/>
    </location>
</feature>
<feature type="region of interest" description="Disordered" evidence="2">
    <location>
        <begin position="289"/>
        <end position="316"/>
    </location>
</feature>
<feature type="region of interest" description="Disordered" evidence="2">
    <location>
        <begin position="336"/>
        <end position="359"/>
    </location>
</feature>
<feature type="region of interest" description="Disordered" evidence="2">
    <location>
        <begin position="467"/>
        <end position="486"/>
    </location>
</feature>
<feature type="region of interest" description="Disordered" evidence="2">
    <location>
        <begin position="496"/>
        <end position="563"/>
    </location>
</feature>
<feature type="region of interest" description="Disordered" evidence="2">
    <location>
        <begin position="576"/>
        <end position="637"/>
    </location>
</feature>
<feature type="region of interest" description="Disordered" evidence="2">
    <location>
        <begin position="651"/>
        <end position="682"/>
    </location>
</feature>
<feature type="region of interest" description="Disordered" evidence="2">
    <location>
        <begin position="697"/>
        <end position="729"/>
    </location>
</feature>
<feature type="region of interest" description="Disordered" evidence="2">
    <location>
        <begin position="760"/>
        <end position="794"/>
    </location>
</feature>
<feature type="region of interest" description="Disordered" evidence="2">
    <location>
        <begin position="818"/>
        <end position="859"/>
    </location>
</feature>
<feature type="region of interest" description="Disordered" evidence="2">
    <location>
        <begin position="940"/>
        <end position="992"/>
    </location>
</feature>
<feature type="compositionally biased region" description="Polar residues" evidence="2">
    <location>
        <begin position="25"/>
        <end position="58"/>
    </location>
</feature>
<feature type="compositionally biased region" description="Polar residues" evidence="2">
    <location>
        <begin position="75"/>
        <end position="104"/>
    </location>
</feature>
<feature type="compositionally biased region" description="Low complexity" evidence="2">
    <location>
        <begin position="193"/>
        <end position="205"/>
    </location>
</feature>
<feature type="compositionally biased region" description="Polar residues" evidence="2">
    <location>
        <begin position="214"/>
        <end position="237"/>
    </location>
</feature>
<feature type="compositionally biased region" description="Polar residues" evidence="2">
    <location>
        <begin position="301"/>
        <end position="315"/>
    </location>
</feature>
<feature type="compositionally biased region" description="Polar residues" evidence="2">
    <location>
        <begin position="337"/>
        <end position="348"/>
    </location>
</feature>
<feature type="compositionally biased region" description="Polar residues" evidence="2">
    <location>
        <begin position="474"/>
        <end position="483"/>
    </location>
</feature>
<feature type="compositionally biased region" description="Polar residues" evidence="2">
    <location>
        <begin position="507"/>
        <end position="532"/>
    </location>
</feature>
<feature type="compositionally biased region" description="Basic and acidic residues" evidence="2">
    <location>
        <begin position="549"/>
        <end position="561"/>
    </location>
</feature>
<feature type="compositionally biased region" description="Basic and acidic residues" evidence="2">
    <location>
        <begin position="577"/>
        <end position="595"/>
    </location>
</feature>
<feature type="compositionally biased region" description="Polar residues" evidence="2">
    <location>
        <begin position="596"/>
        <end position="606"/>
    </location>
</feature>
<feature type="compositionally biased region" description="Polar residues" evidence="2">
    <location>
        <begin position="658"/>
        <end position="676"/>
    </location>
</feature>
<feature type="compositionally biased region" description="Polar residues" evidence="2">
    <location>
        <begin position="707"/>
        <end position="721"/>
    </location>
</feature>
<feature type="compositionally biased region" description="Polar residues" evidence="2">
    <location>
        <begin position="825"/>
        <end position="859"/>
    </location>
</feature>
<feature type="compositionally biased region" description="Polar residues" evidence="2">
    <location>
        <begin position="943"/>
        <end position="966"/>
    </location>
</feature>
<feature type="modified residue" description="Phosphoserine" evidence="5">
    <location>
        <position position="175"/>
    </location>
</feature>
<feature type="modified residue" description="Phosphothreonine" evidence="5">
    <location>
        <position position="318"/>
    </location>
</feature>
<feature type="modified residue" description="Phosphoserine" evidence="5">
    <location>
        <position position="320"/>
    </location>
</feature>
<feature type="modified residue" description="Phosphoserine" evidence="5">
    <location>
        <position position="509"/>
    </location>
</feature>
<feature type="modified residue" description="Phosphoserine" evidence="5">
    <location>
        <position position="604"/>
    </location>
</feature>
<feature type="modified residue" description="Phosphoserine" evidence="5">
    <location>
        <position position="637"/>
    </location>
</feature>
<feature type="modified residue" description="Phosphoserine" evidence="5">
    <location>
        <position position="775"/>
    </location>
</feature>
<feature type="modified residue" description="Phosphoserine" evidence="5">
    <location>
        <position position="829"/>
    </location>
</feature>
<feature type="modified residue" description="Phosphoserine" evidence="5">
    <location>
        <position position="838"/>
    </location>
</feature>
<feature type="modified residue" description="Phosphoserine" evidence="5">
    <location>
        <position position="840"/>
    </location>
</feature>
<protein>
    <recommendedName>
        <fullName>GYF domain-containing protein mpd2</fullName>
    </recommendedName>
</protein>
<accession>O36025</accession>
<gene>
    <name type="primary">mpd2</name>
    <name type="ORF">SPAC4F10.13c</name>
</gene>
<evidence type="ECO:0000255" key="1">
    <source>
        <dbReference type="PROSITE-ProRule" id="PRU00101"/>
    </source>
</evidence>
<evidence type="ECO:0000256" key="2">
    <source>
        <dbReference type="SAM" id="MobiDB-lite"/>
    </source>
</evidence>
<evidence type="ECO:0000269" key="3">
    <source>
    </source>
</evidence>
<evidence type="ECO:0000269" key="4">
    <source>
    </source>
</evidence>
<evidence type="ECO:0000269" key="5">
    <source>
    </source>
</evidence>
<evidence type="ECO:0000305" key="6"/>
<name>MPD2_SCHPO</name>
<keyword id="KW-0963">Cytoplasm</keyword>
<keyword id="KW-0509">mRNA transport</keyword>
<keyword id="KW-0597">Phosphoprotein</keyword>
<keyword id="KW-1185">Reference proteome</keyword>
<keyword id="KW-0813">Transport</keyword>
<reference key="1">
    <citation type="journal article" date="2002" name="Nature">
        <title>The genome sequence of Schizosaccharomyces pombe.</title>
        <authorList>
            <person name="Wood V."/>
            <person name="Gwilliam R."/>
            <person name="Rajandream M.A."/>
            <person name="Lyne M.H."/>
            <person name="Lyne R."/>
            <person name="Stewart A."/>
            <person name="Sgouros J.G."/>
            <person name="Peat N."/>
            <person name="Hayles J."/>
            <person name="Baker S.G."/>
            <person name="Basham D."/>
            <person name="Bowman S."/>
            <person name="Brooks K."/>
            <person name="Brown D."/>
            <person name="Brown S."/>
            <person name="Chillingworth T."/>
            <person name="Churcher C.M."/>
            <person name="Collins M."/>
            <person name="Connor R."/>
            <person name="Cronin A."/>
            <person name="Davis P."/>
            <person name="Feltwell T."/>
            <person name="Fraser A."/>
            <person name="Gentles S."/>
            <person name="Goble A."/>
            <person name="Hamlin N."/>
            <person name="Harris D.E."/>
            <person name="Hidalgo J."/>
            <person name="Hodgson G."/>
            <person name="Holroyd S."/>
            <person name="Hornsby T."/>
            <person name="Howarth S."/>
            <person name="Huckle E.J."/>
            <person name="Hunt S."/>
            <person name="Jagels K."/>
            <person name="James K.D."/>
            <person name="Jones L."/>
            <person name="Jones M."/>
            <person name="Leather S."/>
            <person name="McDonald S."/>
            <person name="McLean J."/>
            <person name="Mooney P."/>
            <person name="Moule S."/>
            <person name="Mungall K.L."/>
            <person name="Murphy L.D."/>
            <person name="Niblett D."/>
            <person name="Odell C."/>
            <person name="Oliver K."/>
            <person name="O'Neil S."/>
            <person name="Pearson D."/>
            <person name="Quail M.A."/>
            <person name="Rabbinowitsch E."/>
            <person name="Rutherford K.M."/>
            <person name="Rutter S."/>
            <person name="Saunders D."/>
            <person name="Seeger K."/>
            <person name="Sharp S."/>
            <person name="Skelton J."/>
            <person name="Simmonds M.N."/>
            <person name="Squares R."/>
            <person name="Squares S."/>
            <person name="Stevens K."/>
            <person name="Taylor K."/>
            <person name="Taylor R.G."/>
            <person name="Tivey A."/>
            <person name="Walsh S.V."/>
            <person name="Warren T."/>
            <person name="Whitehead S."/>
            <person name="Woodward J.R."/>
            <person name="Volckaert G."/>
            <person name="Aert R."/>
            <person name="Robben J."/>
            <person name="Grymonprez B."/>
            <person name="Weltjens I."/>
            <person name="Vanstreels E."/>
            <person name="Rieger M."/>
            <person name="Schaefer M."/>
            <person name="Mueller-Auer S."/>
            <person name="Gabel C."/>
            <person name="Fuchs M."/>
            <person name="Duesterhoeft A."/>
            <person name="Fritzc C."/>
            <person name="Holzer E."/>
            <person name="Moestl D."/>
            <person name="Hilbert H."/>
            <person name="Borzym K."/>
            <person name="Langer I."/>
            <person name="Beck A."/>
            <person name="Lehrach H."/>
            <person name="Reinhardt R."/>
            <person name="Pohl T.M."/>
            <person name="Eger P."/>
            <person name="Zimmermann W."/>
            <person name="Wedler H."/>
            <person name="Wambutt R."/>
            <person name="Purnelle B."/>
            <person name="Goffeau A."/>
            <person name="Cadieu E."/>
            <person name="Dreano S."/>
            <person name="Gloux S."/>
            <person name="Lelaure V."/>
            <person name="Mottier S."/>
            <person name="Galibert F."/>
            <person name="Aves S.J."/>
            <person name="Xiang Z."/>
            <person name="Hunt C."/>
            <person name="Moore K."/>
            <person name="Hurst S.M."/>
            <person name="Lucas M."/>
            <person name="Rochet M."/>
            <person name="Gaillardin C."/>
            <person name="Tallada V.A."/>
            <person name="Garzon A."/>
            <person name="Thode G."/>
            <person name="Daga R.R."/>
            <person name="Cruzado L."/>
            <person name="Jimenez J."/>
            <person name="Sanchez M."/>
            <person name="del Rey F."/>
            <person name="Benito J."/>
            <person name="Dominguez A."/>
            <person name="Revuelta J.L."/>
            <person name="Moreno S."/>
            <person name="Armstrong J."/>
            <person name="Forsburg S.L."/>
            <person name="Cerutti L."/>
            <person name="Lowe T."/>
            <person name="McCombie W.R."/>
            <person name="Paulsen I."/>
            <person name="Potashkin J."/>
            <person name="Shpakovski G.V."/>
            <person name="Ussery D."/>
            <person name="Barrell B.G."/>
            <person name="Nurse P."/>
        </authorList>
    </citation>
    <scope>NUCLEOTIDE SEQUENCE [LARGE SCALE GENOMIC DNA]</scope>
    <source>
        <strain>972 / ATCC 24843</strain>
    </source>
</reference>
<reference key="2">
    <citation type="journal article" date="2004" name="Biochem. Biophys. Res. Commun.">
        <title>The fission yeast ptr1+ gene involved in nuclear mRNA export encodes a putative ubiquitin ligase.</title>
        <authorList>
            <person name="Andoh T."/>
            <person name="Azad A.K."/>
            <person name="Shigematsu A."/>
            <person name="Ohshima Y."/>
            <person name="Tani T."/>
        </authorList>
    </citation>
    <scope>FUNCTION</scope>
</reference>
<reference key="3">
    <citation type="journal article" date="2006" name="Nat. Biotechnol.">
        <title>ORFeome cloning and global analysis of protein localization in the fission yeast Schizosaccharomyces pombe.</title>
        <authorList>
            <person name="Matsuyama A."/>
            <person name="Arai R."/>
            <person name="Yashiroda Y."/>
            <person name="Shirai A."/>
            <person name="Kamata A."/>
            <person name="Sekido S."/>
            <person name="Kobayashi Y."/>
            <person name="Hashimoto A."/>
            <person name="Hamamoto M."/>
            <person name="Hiraoka Y."/>
            <person name="Horinouchi S."/>
            <person name="Yoshida M."/>
        </authorList>
    </citation>
    <scope>SUBCELLULAR LOCATION [LARGE SCALE ANALYSIS]</scope>
</reference>
<reference key="4">
    <citation type="journal article" date="2008" name="J. Proteome Res.">
        <title>Phosphoproteome analysis of fission yeast.</title>
        <authorList>
            <person name="Wilson-Grady J.T."/>
            <person name="Villen J."/>
            <person name="Gygi S.P."/>
        </authorList>
    </citation>
    <scope>PHOSPHORYLATION [LARGE SCALE ANALYSIS] AT SER-175; THR-318; SER-320; SER-509; SER-604; SER-637; SER-775; SER-829; SER-838 AND SER-840</scope>
    <scope>IDENTIFICATION BY MASS SPECTROMETRY</scope>
</reference>